<dbReference type="EC" id="2.1.1.296" evidence="1"/>
<dbReference type="EMBL" id="BC045425">
    <property type="protein sequence ID" value="AAH45425.1"/>
    <property type="molecule type" value="mRNA"/>
</dbReference>
<dbReference type="RefSeq" id="NP_998598.1">
    <property type="nucleotide sequence ID" value="NM_213433.1"/>
</dbReference>
<dbReference type="SMR" id="Q7ZVS8"/>
<dbReference type="FunCoup" id="Q7ZVS8">
    <property type="interactions" value="1785"/>
</dbReference>
<dbReference type="STRING" id="7955.ENSDARP00000052804"/>
<dbReference type="PaxDb" id="7955-ENSDARP00000052804"/>
<dbReference type="GeneID" id="406742"/>
<dbReference type="KEGG" id="dre:406742"/>
<dbReference type="AGR" id="ZFIN:ZDB-GENE-040426-2775"/>
<dbReference type="CTD" id="55783"/>
<dbReference type="ZFIN" id="ZDB-GENE-040426-2775">
    <property type="gene designation" value="cmtr2"/>
</dbReference>
<dbReference type="eggNOG" id="KOG3674">
    <property type="taxonomic scope" value="Eukaryota"/>
</dbReference>
<dbReference type="InParanoid" id="Q7ZVS8"/>
<dbReference type="OrthoDB" id="429597at2759"/>
<dbReference type="PhylomeDB" id="Q7ZVS8"/>
<dbReference type="PRO" id="PR:Q7ZVS8"/>
<dbReference type="Proteomes" id="UP000000437">
    <property type="component" value="Chromosome 7"/>
</dbReference>
<dbReference type="GO" id="GO:0005737">
    <property type="term" value="C:cytoplasm"/>
    <property type="evidence" value="ECO:0000250"/>
    <property type="project" value="UniProtKB"/>
</dbReference>
<dbReference type="GO" id="GO:0005634">
    <property type="term" value="C:nucleus"/>
    <property type="evidence" value="ECO:0000250"/>
    <property type="project" value="UniProtKB"/>
</dbReference>
<dbReference type="GO" id="GO:0004483">
    <property type="term" value="F:mRNA (nucleoside-2'-O-)-methyltransferase activity"/>
    <property type="evidence" value="ECO:0000250"/>
    <property type="project" value="UniProtKB"/>
</dbReference>
<dbReference type="GO" id="GO:0006370">
    <property type="term" value="P:7-methylguanosine mRNA capping"/>
    <property type="evidence" value="ECO:0000250"/>
    <property type="project" value="UniProtKB"/>
</dbReference>
<dbReference type="GO" id="GO:0032259">
    <property type="term" value="P:methylation"/>
    <property type="evidence" value="ECO:0007669"/>
    <property type="project" value="UniProtKB-KW"/>
</dbReference>
<dbReference type="FunFam" id="3.40.50.12760:FF:000002">
    <property type="entry name" value="Cap methyltransferase 2"/>
    <property type="match status" value="1"/>
</dbReference>
<dbReference type="Gene3D" id="3.40.50.12760">
    <property type="match status" value="2"/>
</dbReference>
<dbReference type="InterPro" id="IPR025807">
    <property type="entry name" value="Adrift-typ_MeTrfase"/>
</dbReference>
<dbReference type="InterPro" id="IPR050851">
    <property type="entry name" value="mRNA_Cap_2O-Ribose_MeTrfase"/>
</dbReference>
<dbReference type="InterPro" id="IPR002877">
    <property type="entry name" value="RNA_MeTrfase_FtsJ_dom"/>
</dbReference>
<dbReference type="InterPro" id="IPR029063">
    <property type="entry name" value="SAM-dependent_MTases_sf"/>
</dbReference>
<dbReference type="PANTHER" id="PTHR16121">
    <property type="entry name" value="CAP-SPECIFIC MRNA (NUCLEOSIDE-2'-O-)-METHYLTRANSFERASE 1-RELATED"/>
    <property type="match status" value="1"/>
</dbReference>
<dbReference type="PANTHER" id="PTHR16121:SF2">
    <property type="entry name" value="CAP-SPECIFIC MRNA (NUCLEOSIDE-2'-O-)-METHYLTRANSFERASE 2"/>
    <property type="match status" value="1"/>
</dbReference>
<dbReference type="Pfam" id="PF01728">
    <property type="entry name" value="FtsJ"/>
    <property type="match status" value="1"/>
</dbReference>
<dbReference type="SUPFAM" id="SSF53335">
    <property type="entry name" value="S-adenosyl-L-methionine-dependent methyltransferases"/>
    <property type="match status" value="1"/>
</dbReference>
<dbReference type="PROSITE" id="PS51614">
    <property type="entry name" value="SAM_MT_ADRIFT"/>
    <property type="match status" value="1"/>
</dbReference>
<name>CMTR2_DANRE</name>
<keyword id="KW-0963">Cytoplasm</keyword>
<keyword id="KW-0489">Methyltransferase</keyword>
<keyword id="KW-0506">mRNA capping</keyword>
<keyword id="KW-0507">mRNA processing</keyword>
<keyword id="KW-0539">Nucleus</keyword>
<keyword id="KW-1185">Reference proteome</keyword>
<keyword id="KW-0949">S-adenosyl-L-methionine</keyword>
<keyword id="KW-0808">Transferase</keyword>
<proteinExistence type="evidence at transcript level"/>
<sequence>MNRGRGVRKRNAPEKASILETCDEEIRAEVAQLFNKVRSYVPPAGEKWTLPDPNVVLCDPHVSHPRLQALKHSLNEVKNQLSDKDLSVWHQHTCFTNRAGTVTSHLRSTTNAELCTQAWAKFYEILGTFQLLPDSALKTGELNSIHLCEAPGAFISALNHFLKTSSLHCDWNWIANTLNPYYEANGRGCTITDDRLIVHTLPWWFFGSDNTGDIMLQKHLLELPRFVSNMRSVDLVTADGSFDCQGDPGEQERLVAPLQHCEAICALLLLGTGGSFVLKMFTLFEHSSVCLLYLLACCFRSVNIFKPGTSKSGNSELYIVCLDYQAKEQIRPLLSKLIRNYGPDLASTASLFPRRCIPDSFLSQHEEICTFFQALQVNTIQENLRLFVCMSTEQRRRLEQLREYAAEFYTKRFSVQYLPRKSWVCRGGVVRWVKVCERKQMGSLNQRKEMELQGWKQRLAQGNYGPFIEKHLVAAEGCEVVLNGPLDECDLGAWFALEGAALPKVCSSIFCDQEMLDFLNEALEGNLRVKTVNWSLKALPTCSSCSSDSPVSILSEICSHPDVTSCLVLGSQSWCDDKLTGVRIQPEFLQGPSYCGVQNVTMHDGQPDYQLELLNAVLFALQKQDQGSTLVIPLSSALTRFTSGLVFTLHLCFRYITFRCLSGWPPAALVCMGFSPPSALPSLLDFLQNVMEKMKKVELGRQVLQFVPLEELLRGELPHFLSSFNTAVIRQQLHMLIQLDQST</sequence>
<organism>
    <name type="scientific">Danio rerio</name>
    <name type="common">Zebrafish</name>
    <name type="synonym">Brachydanio rerio</name>
    <dbReference type="NCBI Taxonomy" id="7955"/>
    <lineage>
        <taxon>Eukaryota</taxon>
        <taxon>Metazoa</taxon>
        <taxon>Chordata</taxon>
        <taxon>Craniata</taxon>
        <taxon>Vertebrata</taxon>
        <taxon>Euteleostomi</taxon>
        <taxon>Actinopterygii</taxon>
        <taxon>Neopterygii</taxon>
        <taxon>Teleostei</taxon>
        <taxon>Ostariophysi</taxon>
        <taxon>Cypriniformes</taxon>
        <taxon>Danionidae</taxon>
        <taxon>Danioninae</taxon>
        <taxon>Danio</taxon>
    </lineage>
</organism>
<gene>
    <name type="primary">cmtr2</name>
    <name type="synonym">ftsjd1</name>
    <name type="ORF">zgc:55686</name>
</gene>
<protein>
    <recommendedName>
        <fullName>Cap-specific mRNA (nucleoside-2'-O-)-methyltransferase 2</fullName>
        <ecNumber evidence="1">2.1.1.296</ecNumber>
    </recommendedName>
    <alternativeName>
        <fullName>Cap methyltransferase 2</fullName>
    </alternativeName>
    <alternativeName>
        <fullName>Cap2 2'O-ribose methyltransferase 2</fullName>
        <shortName>MTr2</shortName>
    </alternativeName>
    <alternativeName>
        <fullName>FtsJ methyltransferase domain-containing protein 1</fullName>
    </alternativeName>
</protein>
<reference key="1">
    <citation type="submission" date="2003-01" db="EMBL/GenBank/DDBJ databases">
        <authorList>
            <consortium name="NIH - Zebrafish Gene Collection (ZGC) project"/>
        </authorList>
    </citation>
    <scope>NUCLEOTIDE SEQUENCE [LARGE SCALE MRNA]</scope>
    <source>
        <strain>AB</strain>
    </source>
</reference>
<comment type="function">
    <text evidence="1">S-adenosyl-L-methionine-dependent methyltransferase that mediates mRNA cap2 2'-O-ribose methylation to the 5'-cap structure of mRNAs. Methylates the ribose of the second nucleotide of a m(7)GpppG-capped mRNA and small nuclear RNA (snRNA) (cap0) to produce m(7)GpppRmpNm (cap2).</text>
</comment>
<comment type="catalytic activity">
    <reaction evidence="1">
        <text>a 5'-end (N(7)-methyl 5'-triphosphoguanosine)-(2'-O-methyl-ribonucleoside)-(ribonucleotide) in mRNA + S-adenosyl-L-methionine = a 5'-end (N(7)-methyl 5'-triphosphoguanosine)-(2'-O-methyl-ribonucleoside)-(2'-O-methyl-ribonucleotide) in mRNA + S-adenosyl-L-homocysteine + H(+)</text>
        <dbReference type="Rhea" id="RHEA:67024"/>
        <dbReference type="Rhea" id="RHEA-COMP:17169"/>
        <dbReference type="Rhea" id="RHEA-COMP:17170"/>
        <dbReference type="ChEBI" id="CHEBI:15378"/>
        <dbReference type="ChEBI" id="CHEBI:57856"/>
        <dbReference type="ChEBI" id="CHEBI:59789"/>
        <dbReference type="ChEBI" id="CHEBI:167612"/>
        <dbReference type="ChEBI" id="CHEBI:167614"/>
        <dbReference type="EC" id="2.1.1.296"/>
    </reaction>
</comment>
<comment type="subcellular location">
    <subcellularLocation>
        <location evidence="1">Nucleus</location>
    </subcellularLocation>
    <subcellularLocation>
        <location evidence="1">Cytoplasm</location>
    </subcellularLocation>
</comment>
<accession>Q7ZVS8</accession>
<evidence type="ECO:0000250" key="1">
    <source>
        <dbReference type="UniProtKB" id="Q8IYT2"/>
    </source>
</evidence>
<evidence type="ECO:0000255" key="2">
    <source>
        <dbReference type="PROSITE-ProRule" id="PRU00946"/>
    </source>
</evidence>
<feature type="chain" id="PRO_0000326183" description="Cap-specific mRNA (nucleoside-2'-O-)-methyltransferase 2">
    <location>
        <begin position="1"/>
        <end position="743"/>
    </location>
</feature>
<feature type="domain" description="Adrift-type SAM-dependent 2'-O-MTase" evidence="2">
    <location>
        <begin position="113"/>
        <end position="326"/>
    </location>
</feature>
<feature type="active site" evidence="1">
    <location>
        <position position="121"/>
    </location>
</feature>
<feature type="active site" evidence="1">
    <location>
        <position position="239"/>
    </location>
</feature>
<feature type="active site" description="Proton acceptor" evidence="2">
    <location>
        <position position="279"/>
    </location>
</feature>
<feature type="binding site" evidence="2">
    <location>
        <position position="152"/>
    </location>
    <ligand>
        <name>S-adenosyl-L-methionine</name>
        <dbReference type="ChEBI" id="CHEBI:59789"/>
    </ligand>
</feature>
<feature type="binding site" evidence="2">
    <location>
        <position position="171"/>
    </location>
    <ligand>
        <name>S-adenosyl-L-methionine</name>
        <dbReference type="ChEBI" id="CHEBI:59789"/>
    </ligand>
</feature>
<feature type="binding site" evidence="2">
    <location>
        <position position="239"/>
    </location>
    <ligand>
        <name>S-adenosyl-L-methionine</name>
        <dbReference type="ChEBI" id="CHEBI:59789"/>
    </ligand>
</feature>